<protein>
    <recommendedName>
        <fullName evidence="1">Nucleoid-associated protein A1E_05550</fullName>
    </recommendedName>
</protein>
<proteinExistence type="inferred from homology"/>
<name>Y5550_RICCK</name>
<gene>
    <name type="ordered locus">A1E_05550</name>
</gene>
<accession>A8F088</accession>
<comment type="function">
    <text evidence="1">Binds to DNA and alters its conformation. May be involved in regulation of gene expression, nucleoid organization and DNA protection.</text>
</comment>
<comment type="subunit">
    <text evidence="1">Homodimer.</text>
</comment>
<comment type="subcellular location">
    <subcellularLocation>
        <location evidence="1">Cytoplasm</location>
        <location evidence="1">Nucleoid</location>
    </subcellularLocation>
</comment>
<comment type="similarity">
    <text evidence="1">Belongs to the YbaB/EbfC family.</text>
</comment>
<organism>
    <name type="scientific">Rickettsia canadensis (strain McKiel)</name>
    <dbReference type="NCBI Taxonomy" id="293613"/>
    <lineage>
        <taxon>Bacteria</taxon>
        <taxon>Pseudomonadati</taxon>
        <taxon>Pseudomonadota</taxon>
        <taxon>Alphaproteobacteria</taxon>
        <taxon>Rickettsiales</taxon>
        <taxon>Rickettsiaceae</taxon>
        <taxon>Rickettsieae</taxon>
        <taxon>Rickettsia</taxon>
        <taxon>belli group</taxon>
    </lineage>
</organism>
<keyword id="KW-0963">Cytoplasm</keyword>
<keyword id="KW-0238">DNA-binding</keyword>
<feature type="chain" id="PRO_1000003815" description="Nucleoid-associated protein A1E_05550">
    <location>
        <begin position="1"/>
        <end position="107"/>
    </location>
</feature>
<dbReference type="EMBL" id="CP000409">
    <property type="protein sequence ID" value="ABV74021.1"/>
    <property type="molecule type" value="Genomic_DNA"/>
</dbReference>
<dbReference type="RefSeq" id="WP_012149216.1">
    <property type="nucleotide sequence ID" value="NC_009879.1"/>
</dbReference>
<dbReference type="SMR" id="A8F088"/>
<dbReference type="STRING" id="293613.A1E_05550"/>
<dbReference type="KEGG" id="rcm:A1E_05550"/>
<dbReference type="eggNOG" id="COG0718">
    <property type="taxonomic scope" value="Bacteria"/>
</dbReference>
<dbReference type="HOGENOM" id="CLU_140930_0_0_5"/>
<dbReference type="Proteomes" id="UP000007056">
    <property type="component" value="Chromosome"/>
</dbReference>
<dbReference type="GO" id="GO:0043590">
    <property type="term" value="C:bacterial nucleoid"/>
    <property type="evidence" value="ECO:0007669"/>
    <property type="project" value="UniProtKB-UniRule"/>
</dbReference>
<dbReference type="GO" id="GO:0005829">
    <property type="term" value="C:cytosol"/>
    <property type="evidence" value="ECO:0007669"/>
    <property type="project" value="TreeGrafter"/>
</dbReference>
<dbReference type="GO" id="GO:0003677">
    <property type="term" value="F:DNA binding"/>
    <property type="evidence" value="ECO:0007669"/>
    <property type="project" value="UniProtKB-UniRule"/>
</dbReference>
<dbReference type="Gene3D" id="3.30.1310.10">
    <property type="entry name" value="Nucleoid-associated protein YbaB-like domain"/>
    <property type="match status" value="1"/>
</dbReference>
<dbReference type="HAMAP" id="MF_00274">
    <property type="entry name" value="DNA_YbaB_EbfC"/>
    <property type="match status" value="1"/>
</dbReference>
<dbReference type="InterPro" id="IPR036894">
    <property type="entry name" value="YbaB-like_sf"/>
</dbReference>
<dbReference type="InterPro" id="IPR004401">
    <property type="entry name" value="YbaB/EbfC"/>
</dbReference>
<dbReference type="NCBIfam" id="TIGR00103">
    <property type="entry name" value="DNA_YbaB_EbfC"/>
    <property type="match status" value="1"/>
</dbReference>
<dbReference type="PANTHER" id="PTHR33449">
    <property type="entry name" value="NUCLEOID-ASSOCIATED PROTEIN YBAB"/>
    <property type="match status" value="1"/>
</dbReference>
<dbReference type="PANTHER" id="PTHR33449:SF1">
    <property type="entry name" value="NUCLEOID-ASSOCIATED PROTEIN YBAB"/>
    <property type="match status" value="1"/>
</dbReference>
<dbReference type="Pfam" id="PF02575">
    <property type="entry name" value="YbaB_DNA_bd"/>
    <property type="match status" value="1"/>
</dbReference>
<dbReference type="PIRSF" id="PIRSF004555">
    <property type="entry name" value="UCP004555"/>
    <property type="match status" value="1"/>
</dbReference>
<dbReference type="SUPFAM" id="SSF82607">
    <property type="entry name" value="YbaB-like"/>
    <property type="match status" value="1"/>
</dbReference>
<sequence>MVNFNQFLKQAQSMQKKMQEAQEQMVNARYTGKAGGRLVEITITGRSEVEKVSIDESLLKAEEKEMLEDLIKVAFNDAKQKCDEDSQNSLSGALNGINLPPGFKMPF</sequence>
<reference key="1">
    <citation type="submission" date="2007-09" db="EMBL/GenBank/DDBJ databases">
        <title>Complete genome sequence of Rickettsia canadensis.</title>
        <authorList>
            <person name="Madan A."/>
            <person name="Fahey J."/>
            <person name="Helton E."/>
            <person name="Ketteman M."/>
            <person name="Madan A."/>
            <person name="Rodrigues S."/>
            <person name="Sanchez A."/>
            <person name="Whiting M."/>
            <person name="Dasch G."/>
            <person name="Eremeeva M."/>
        </authorList>
    </citation>
    <scope>NUCLEOTIDE SEQUENCE [LARGE SCALE GENOMIC DNA]</scope>
    <source>
        <strain>McKiel</strain>
    </source>
</reference>
<evidence type="ECO:0000255" key="1">
    <source>
        <dbReference type="HAMAP-Rule" id="MF_00274"/>
    </source>
</evidence>